<dbReference type="EC" id="4.1.1.48" evidence="1"/>
<dbReference type="EMBL" id="BX571857">
    <property type="protein sequence ID" value="CAG43087.1"/>
    <property type="molecule type" value="Genomic_DNA"/>
</dbReference>
<dbReference type="RefSeq" id="WP_000154116.1">
    <property type="nucleotide sequence ID" value="NC_002953.3"/>
</dbReference>
<dbReference type="SMR" id="Q6G9I9"/>
<dbReference type="KEGG" id="sas:SAS1310"/>
<dbReference type="HOGENOM" id="CLU_034247_2_1_9"/>
<dbReference type="UniPathway" id="UPA00035">
    <property type="reaction ID" value="UER00043"/>
</dbReference>
<dbReference type="GO" id="GO:0004425">
    <property type="term" value="F:indole-3-glycerol-phosphate synthase activity"/>
    <property type="evidence" value="ECO:0007669"/>
    <property type="project" value="UniProtKB-UniRule"/>
</dbReference>
<dbReference type="GO" id="GO:0004640">
    <property type="term" value="F:phosphoribosylanthranilate isomerase activity"/>
    <property type="evidence" value="ECO:0007669"/>
    <property type="project" value="TreeGrafter"/>
</dbReference>
<dbReference type="GO" id="GO:0000162">
    <property type="term" value="P:L-tryptophan biosynthetic process"/>
    <property type="evidence" value="ECO:0007669"/>
    <property type="project" value="UniProtKB-UniRule"/>
</dbReference>
<dbReference type="CDD" id="cd00331">
    <property type="entry name" value="IGPS"/>
    <property type="match status" value="1"/>
</dbReference>
<dbReference type="FunFam" id="3.20.20.70:FF:000212">
    <property type="entry name" value="Indole-3-glycerol phosphate synthase"/>
    <property type="match status" value="1"/>
</dbReference>
<dbReference type="Gene3D" id="3.20.20.70">
    <property type="entry name" value="Aldolase class I"/>
    <property type="match status" value="1"/>
</dbReference>
<dbReference type="HAMAP" id="MF_00134_B">
    <property type="entry name" value="IGPS_B"/>
    <property type="match status" value="1"/>
</dbReference>
<dbReference type="InterPro" id="IPR013785">
    <property type="entry name" value="Aldolase_TIM"/>
</dbReference>
<dbReference type="InterPro" id="IPR045186">
    <property type="entry name" value="Indole-3-glycerol_P_synth"/>
</dbReference>
<dbReference type="InterPro" id="IPR013798">
    <property type="entry name" value="Indole-3-glycerol_P_synth_dom"/>
</dbReference>
<dbReference type="InterPro" id="IPR001468">
    <property type="entry name" value="Indole-3-GlycerolPSynthase_CS"/>
</dbReference>
<dbReference type="InterPro" id="IPR011060">
    <property type="entry name" value="RibuloseP-bd_barrel"/>
</dbReference>
<dbReference type="NCBIfam" id="NF001371">
    <property type="entry name" value="PRK00278.1-3"/>
    <property type="match status" value="1"/>
</dbReference>
<dbReference type="PANTHER" id="PTHR22854:SF2">
    <property type="entry name" value="INDOLE-3-GLYCEROL-PHOSPHATE SYNTHASE"/>
    <property type="match status" value="1"/>
</dbReference>
<dbReference type="PANTHER" id="PTHR22854">
    <property type="entry name" value="TRYPTOPHAN BIOSYNTHESIS PROTEIN"/>
    <property type="match status" value="1"/>
</dbReference>
<dbReference type="Pfam" id="PF00218">
    <property type="entry name" value="IGPS"/>
    <property type="match status" value="1"/>
</dbReference>
<dbReference type="SUPFAM" id="SSF51366">
    <property type="entry name" value="Ribulose-phoshate binding barrel"/>
    <property type="match status" value="1"/>
</dbReference>
<dbReference type="PROSITE" id="PS00614">
    <property type="entry name" value="IGPS"/>
    <property type="match status" value="1"/>
</dbReference>
<evidence type="ECO:0000255" key="1">
    <source>
        <dbReference type="HAMAP-Rule" id="MF_00134"/>
    </source>
</evidence>
<proteinExistence type="inferred from homology"/>
<protein>
    <recommendedName>
        <fullName evidence="1">Indole-3-glycerol phosphate synthase</fullName>
        <shortName evidence="1">IGPS</shortName>
        <ecNumber evidence="1">4.1.1.48</ecNumber>
    </recommendedName>
</protein>
<comment type="catalytic activity">
    <reaction evidence="1">
        <text>1-(2-carboxyphenylamino)-1-deoxy-D-ribulose 5-phosphate + H(+) = (1S,2R)-1-C-(indol-3-yl)glycerol 3-phosphate + CO2 + H2O</text>
        <dbReference type="Rhea" id="RHEA:23476"/>
        <dbReference type="ChEBI" id="CHEBI:15377"/>
        <dbReference type="ChEBI" id="CHEBI:15378"/>
        <dbReference type="ChEBI" id="CHEBI:16526"/>
        <dbReference type="ChEBI" id="CHEBI:58613"/>
        <dbReference type="ChEBI" id="CHEBI:58866"/>
        <dbReference type="EC" id="4.1.1.48"/>
    </reaction>
</comment>
<comment type="pathway">
    <text evidence="1">Amino-acid biosynthesis; L-tryptophan biosynthesis; L-tryptophan from chorismate: step 4/5.</text>
</comment>
<comment type="similarity">
    <text evidence="1">Belongs to the TrpC family.</text>
</comment>
<gene>
    <name evidence="1" type="primary">trpC</name>
    <name type="ordered locus">SAS1310</name>
</gene>
<organism>
    <name type="scientific">Staphylococcus aureus (strain MSSA476)</name>
    <dbReference type="NCBI Taxonomy" id="282459"/>
    <lineage>
        <taxon>Bacteria</taxon>
        <taxon>Bacillati</taxon>
        <taxon>Bacillota</taxon>
        <taxon>Bacilli</taxon>
        <taxon>Bacillales</taxon>
        <taxon>Staphylococcaceae</taxon>
        <taxon>Staphylococcus</taxon>
    </lineage>
</organism>
<sequence length="260" mass="29527">MTILSEIVKYKQSLLQNGYYQDKLNTLKSVKIQNKKSFINAIEKEPKLAIIAEIKSKSPTVNDLPERDLSQQISDYDQYGANAVSILTDEKYFGGSFERLQALTTKTTLPVLCKDFIIDPLQIDVAKQAGASMILLIVNILSDKQLKDLYNYAISQNLEVLVEVHDRHELERAYKVNAKLIGVNNRDLKRFVTNVEHTNTILENKKTNHYYISESGIHDASDVRKILHSGIDGLLIGEALMRCDNLSEFLPQLKMQKVKS</sequence>
<keyword id="KW-0028">Amino-acid biosynthesis</keyword>
<keyword id="KW-0057">Aromatic amino acid biosynthesis</keyword>
<keyword id="KW-0210">Decarboxylase</keyword>
<keyword id="KW-0456">Lyase</keyword>
<keyword id="KW-0822">Tryptophan biosynthesis</keyword>
<reference key="1">
    <citation type="journal article" date="2004" name="Proc. Natl. Acad. Sci. U.S.A.">
        <title>Complete genomes of two clinical Staphylococcus aureus strains: evidence for the rapid evolution of virulence and drug resistance.</title>
        <authorList>
            <person name="Holden M.T.G."/>
            <person name="Feil E.J."/>
            <person name="Lindsay J.A."/>
            <person name="Peacock S.J."/>
            <person name="Day N.P.J."/>
            <person name="Enright M.C."/>
            <person name="Foster T.J."/>
            <person name="Moore C.E."/>
            <person name="Hurst L."/>
            <person name="Atkin R."/>
            <person name="Barron A."/>
            <person name="Bason N."/>
            <person name="Bentley S.D."/>
            <person name="Chillingworth C."/>
            <person name="Chillingworth T."/>
            <person name="Churcher C."/>
            <person name="Clark L."/>
            <person name="Corton C."/>
            <person name="Cronin A."/>
            <person name="Doggett J."/>
            <person name="Dowd L."/>
            <person name="Feltwell T."/>
            <person name="Hance Z."/>
            <person name="Harris B."/>
            <person name="Hauser H."/>
            <person name="Holroyd S."/>
            <person name="Jagels K."/>
            <person name="James K.D."/>
            <person name="Lennard N."/>
            <person name="Line A."/>
            <person name="Mayes R."/>
            <person name="Moule S."/>
            <person name="Mungall K."/>
            <person name="Ormond D."/>
            <person name="Quail M.A."/>
            <person name="Rabbinowitsch E."/>
            <person name="Rutherford K.M."/>
            <person name="Sanders M."/>
            <person name="Sharp S."/>
            <person name="Simmonds M."/>
            <person name="Stevens K."/>
            <person name="Whitehead S."/>
            <person name="Barrell B.G."/>
            <person name="Spratt B.G."/>
            <person name="Parkhill J."/>
        </authorList>
    </citation>
    <scope>NUCLEOTIDE SEQUENCE [LARGE SCALE GENOMIC DNA]</scope>
    <source>
        <strain>MSSA476</strain>
    </source>
</reference>
<accession>Q6G9I9</accession>
<name>TRPC_STAAS</name>
<feature type="chain" id="PRO_0000154253" description="Indole-3-glycerol phosphate synthase">
    <location>
        <begin position="1"/>
        <end position="260"/>
    </location>
</feature>